<dbReference type="EC" id="2.5.1.75" evidence="1"/>
<dbReference type="EMBL" id="CP000089">
    <property type="protein sequence ID" value="AAZ47901.1"/>
    <property type="molecule type" value="Genomic_DNA"/>
</dbReference>
<dbReference type="SMR" id="Q47B80"/>
<dbReference type="STRING" id="159087.Daro_3171"/>
<dbReference type="KEGG" id="dar:Daro_3171"/>
<dbReference type="eggNOG" id="COG0324">
    <property type="taxonomic scope" value="Bacteria"/>
</dbReference>
<dbReference type="HOGENOM" id="CLU_032616_0_0_4"/>
<dbReference type="OrthoDB" id="9776390at2"/>
<dbReference type="GO" id="GO:0005524">
    <property type="term" value="F:ATP binding"/>
    <property type="evidence" value="ECO:0007669"/>
    <property type="project" value="UniProtKB-UniRule"/>
</dbReference>
<dbReference type="GO" id="GO:0052381">
    <property type="term" value="F:tRNA dimethylallyltransferase activity"/>
    <property type="evidence" value="ECO:0007669"/>
    <property type="project" value="UniProtKB-UniRule"/>
</dbReference>
<dbReference type="GO" id="GO:0006400">
    <property type="term" value="P:tRNA modification"/>
    <property type="evidence" value="ECO:0007669"/>
    <property type="project" value="TreeGrafter"/>
</dbReference>
<dbReference type="FunFam" id="1.10.20.140:FF:000001">
    <property type="entry name" value="tRNA dimethylallyltransferase"/>
    <property type="match status" value="1"/>
</dbReference>
<dbReference type="Gene3D" id="1.10.20.140">
    <property type="match status" value="1"/>
</dbReference>
<dbReference type="Gene3D" id="3.40.50.300">
    <property type="entry name" value="P-loop containing nucleotide triphosphate hydrolases"/>
    <property type="match status" value="1"/>
</dbReference>
<dbReference type="HAMAP" id="MF_00185">
    <property type="entry name" value="IPP_trans"/>
    <property type="match status" value="1"/>
</dbReference>
<dbReference type="InterPro" id="IPR039657">
    <property type="entry name" value="Dimethylallyltransferase"/>
</dbReference>
<dbReference type="InterPro" id="IPR018022">
    <property type="entry name" value="IPT"/>
</dbReference>
<dbReference type="InterPro" id="IPR027417">
    <property type="entry name" value="P-loop_NTPase"/>
</dbReference>
<dbReference type="NCBIfam" id="TIGR00174">
    <property type="entry name" value="miaA"/>
    <property type="match status" value="1"/>
</dbReference>
<dbReference type="PANTHER" id="PTHR11088">
    <property type="entry name" value="TRNA DIMETHYLALLYLTRANSFERASE"/>
    <property type="match status" value="1"/>
</dbReference>
<dbReference type="PANTHER" id="PTHR11088:SF60">
    <property type="entry name" value="TRNA DIMETHYLALLYLTRANSFERASE"/>
    <property type="match status" value="1"/>
</dbReference>
<dbReference type="Pfam" id="PF01715">
    <property type="entry name" value="IPPT"/>
    <property type="match status" value="1"/>
</dbReference>
<dbReference type="SUPFAM" id="SSF52540">
    <property type="entry name" value="P-loop containing nucleoside triphosphate hydrolases"/>
    <property type="match status" value="1"/>
</dbReference>
<gene>
    <name evidence="1" type="primary">miaA</name>
    <name type="ordered locus">Daro_3171</name>
</gene>
<protein>
    <recommendedName>
        <fullName evidence="1">tRNA dimethylallyltransferase</fullName>
        <ecNumber evidence="1">2.5.1.75</ecNumber>
    </recommendedName>
    <alternativeName>
        <fullName evidence="1">Dimethylallyl diphosphate:tRNA dimethylallyltransferase</fullName>
        <shortName evidence="1">DMAPP:tRNA dimethylallyltransferase</shortName>
        <shortName evidence="1">DMATase</shortName>
    </alternativeName>
    <alternativeName>
        <fullName evidence="1">Isopentenyl-diphosphate:tRNA isopentenyltransferase</fullName>
        <shortName evidence="1">IPP transferase</shortName>
        <shortName evidence="1">IPPT</shortName>
        <shortName evidence="1">IPTase</shortName>
    </alternativeName>
</protein>
<feature type="chain" id="PRO_0000377136" description="tRNA dimethylallyltransferase">
    <location>
        <begin position="1"/>
        <end position="314"/>
    </location>
</feature>
<feature type="region of interest" description="Interaction with substrate tRNA" evidence="1">
    <location>
        <begin position="39"/>
        <end position="42"/>
    </location>
</feature>
<feature type="region of interest" description="Interaction with substrate tRNA" evidence="1">
    <location>
        <begin position="163"/>
        <end position="167"/>
    </location>
</feature>
<feature type="region of interest" description="Interaction with substrate tRNA" evidence="1">
    <location>
        <begin position="245"/>
        <end position="250"/>
    </location>
</feature>
<feature type="binding site" evidence="1">
    <location>
        <begin position="14"/>
        <end position="21"/>
    </location>
    <ligand>
        <name>ATP</name>
        <dbReference type="ChEBI" id="CHEBI:30616"/>
    </ligand>
</feature>
<feature type="binding site" evidence="1">
    <location>
        <begin position="16"/>
        <end position="21"/>
    </location>
    <ligand>
        <name>substrate</name>
    </ligand>
</feature>
<feature type="site" description="Interaction with substrate tRNA" evidence="1">
    <location>
        <position position="105"/>
    </location>
</feature>
<feature type="site" description="Interaction with substrate tRNA" evidence="1">
    <location>
        <position position="127"/>
    </location>
</feature>
<sequence length="314" mass="35014">MNPPRLPPAILIMGPTASGKTAVAMALADRFPVELISVDSAQVFIDMDVGTAKPDRATLDRYPHRLIDLITPEESYSAARFRADALTAMAEITAAGKVPVLVGGTMMYYRALLHGLADLPQADAELRAEIDAEAAAEGWPAMHAKLALVDPATAARLHPTDSQRLQRALEICRLTGRPMSELLAESEKQKPPYDLLQIGLLPSDRAVLHQRIARRFDEMLLAGLDEEVRQLRQKYELNLNLPSMRCVGYRQTWEMQEGLIPKREWRDRGVFATRQLAKRQITWLTNSFAAENYDCLDPALVERIAARTEAFLSS</sequence>
<comment type="function">
    <text evidence="1">Catalyzes the transfer of a dimethylallyl group onto the adenine at position 37 in tRNAs that read codons beginning with uridine, leading to the formation of N6-(dimethylallyl)adenosine (i(6)A).</text>
</comment>
<comment type="catalytic activity">
    <reaction evidence="1">
        <text>adenosine(37) in tRNA + dimethylallyl diphosphate = N(6)-dimethylallyladenosine(37) in tRNA + diphosphate</text>
        <dbReference type="Rhea" id="RHEA:26482"/>
        <dbReference type="Rhea" id="RHEA-COMP:10162"/>
        <dbReference type="Rhea" id="RHEA-COMP:10375"/>
        <dbReference type="ChEBI" id="CHEBI:33019"/>
        <dbReference type="ChEBI" id="CHEBI:57623"/>
        <dbReference type="ChEBI" id="CHEBI:74411"/>
        <dbReference type="ChEBI" id="CHEBI:74415"/>
        <dbReference type="EC" id="2.5.1.75"/>
    </reaction>
</comment>
<comment type="cofactor">
    <cofactor evidence="1">
        <name>Mg(2+)</name>
        <dbReference type="ChEBI" id="CHEBI:18420"/>
    </cofactor>
</comment>
<comment type="subunit">
    <text evidence="1">Monomer.</text>
</comment>
<comment type="similarity">
    <text evidence="1">Belongs to the IPP transferase family.</text>
</comment>
<evidence type="ECO:0000255" key="1">
    <source>
        <dbReference type="HAMAP-Rule" id="MF_00185"/>
    </source>
</evidence>
<reference key="1">
    <citation type="journal article" date="2009" name="BMC Genomics">
        <title>Metabolic analysis of the soil microbe Dechloromonas aromatica str. RCB: indications of a surprisingly complex life-style and cryptic anaerobic pathways for aromatic degradation.</title>
        <authorList>
            <person name="Salinero K.K."/>
            <person name="Keller K."/>
            <person name="Feil W.S."/>
            <person name="Feil H."/>
            <person name="Trong S."/>
            <person name="Di Bartolo G."/>
            <person name="Lapidus A."/>
        </authorList>
    </citation>
    <scope>NUCLEOTIDE SEQUENCE [LARGE SCALE GENOMIC DNA]</scope>
    <source>
        <strain>RCB</strain>
    </source>
</reference>
<keyword id="KW-0067">ATP-binding</keyword>
<keyword id="KW-0460">Magnesium</keyword>
<keyword id="KW-0547">Nucleotide-binding</keyword>
<keyword id="KW-0808">Transferase</keyword>
<keyword id="KW-0819">tRNA processing</keyword>
<accession>Q47B80</accession>
<proteinExistence type="inferred from homology"/>
<name>MIAA_DECAR</name>
<organism>
    <name type="scientific">Dechloromonas aromatica (strain RCB)</name>
    <dbReference type="NCBI Taxonomy" id="159087"/>
    <lineage>
        <taxon>Bacteria</taxon>
        <taxon>Pseudomonadati</taxon>
        <taxon>Pseudomonadota</taxon>
        <taxon>Betaproteobacteria</taxon>
        <taxon>Rhodocyclales</taxon>
        <taxon>Azonexaceae</taxon>
        <taxon>Dechloromonas</taxon>
    </lineage>
</organism>